<keyword id="KW-0687">Ribonucleoprotein</keyword>
<keyword id="KW-0689">Ribosomal protein</keyword>
<sequence length="58" mass="6878">MTQVVLGENEGIDSALRRFKRQVSKAGILADVKYHRHFETPLERRKRKAVAARRKRRF</sequence>
<comment type="similarity">
    <text evidence="1">Belongs to the bacterial ribosomal protein bS21 family.</text>
</comment>
<dbReference type="EMBL" id="CP000117">
    <property type="protein sequence ID" value="ABA24045.1"/>
    <property type="molecule type" value="Genomic_DNA"/>
</dbReference>
<dbReference type="SMR" id="Q3M4P1"/>
<dbReference type="STRING" id="240292.Ava_4447"/>
<dbReference type="KEGG" id="ava:Ava_4447"/>
<dbReference type="eggNOG" id="COG0828">
    <property type="taxonomic scope" value="Bacteria"/>
</dbReference>
<dbReference type="HOGENOM" id="CLU_159258_3_1_3"/>
<dbReference type="Proteomes" id="UP000002533">
    <property type="component" value="Chromosome"/>
</dbReference>
<dbReference type="GO" id="GO:1990904">
    <property type="term" value="C:ribonucleoprotein complex"/>
    <property type="evidence" value="ECO:0007669"/>
    <property type="project" value="UniProtKB-KW"/>
</dbReference>
<dbReference type="GO" id="GO:0005840">
    <property type="term" value="C:ribosome"/>
    <property type="evidence" value="ECO:0007669"/>
    <property type="project" value="UniProtKB-KW"/>
</dbReference>
<dbReference type="GO" id="GO:0003735">
    <property type="term" value="F:structural constituent of ribosome"/>
    <property type="evidence" value="ECO:0007669"/>
    <property type="project" value="InterPro"/>
</dbReference>
<dbReference type="GO" id="GO:0006412">
    <property type="term" value="P:translation"/>
    <property type="evidence" value="ECO:0007669"/>
    <property type="project" value="UniProtKB-UniRule"/>
</dbReference>
<dbReference type="Gene3D" id="1.20.5.1150">
    <property type="entry name" value="Ribosomal protein S8"/>
    <property type="match status" value="1"/>
</dbReference>
<dbReference type="HAMAP" id="MF_00358">
    <property type="entry name" value="Ribosomal_bS21"/>
    <property type="match status" value="1"/>
</dbReference>
<dbReference type="InterPro" id="IPR001911">
    <property type="entry name" value="Ribosomal_bS21"/>
</dbReference>
<dbReference type="InterPro" id="IPR018278">
    <property type="entry name" value="Ribosomal_bS21_CS"/>
</dbReference>
<dbReference type="InterPro" id="IPR038380">
    <property type="entry name" value="Ribosomal_bS21_sf"/>
</dbReference>
<dbReference type="NCBIfam" id="TIGR00030">
    <property type="entry name" value="S21p"/>
    <property type="match status" value="1"/>
</dbReference>
<dbReference type="PANTHER" id="PTHR21109">
    <property type="entry name" value="MITOCHONDRIAL 28S RIBOSOMAL PROTEIN S21"/>
    <property type="match status" value="1"/>
</dbReference>
<dbReference type="PANTHER" id="PTHR21109:SF0">
    <property type="entry name" value="SMALL RIBOSOMAL SUBUNIT PROTEIN BS21M"/>
    <property type="match status" value="1"/>
</dbReference>
<dbReference type="Pfam" id="PF01165">
    <property type="entry name" value="Ribosomal_S21"/>
    <property type="match status" value="1"/>
</dbReference>
<dbReference type="PRINTS" id="PR00976">
    <property type="entry name" value="RIBOSOMALS21"/>
</dbReference>
<dbReference type="PROSITE" id="PS01181">
    <property type="entry name" value="RIBOSOMAL_S21"/>
    <property type="match status" value="1"/>
</dbReference>
<reference key="1">
    <citation type="journal article" date="2014" name="Stand. Genomic Sci.">
        <title>Complete genome sequence of Anabaena variabilis ATCC 29413.</title>
        <authorList>
            <person name="Thiel T."/>
            <person name="Pratte B.S."/>
            <person name="Zhong J."/>
            <person name="Goodwin L."/>
            <person name="Copeland A."/>
            <person name="Lucas S."/>
            <person name="Han C."/>
            <person name="Pitluck S."/>
            <person name="Land M.L."/>
            <person name="Kyrpides N.C."/>
            <person name="Woyke T."/>
        </authorList>
    </citation>
    <scope>NUCLEOTIDE SEQUENCE [LARGE SCALE GENOMIC DNA]</scope>
    <source>
        <strain>ATCC 29413 / PCC 7937</strain>
    </source>
</reference>
<proteinExistence type="inferred from homology"/>
<accession>Q3M4P1</accession>
<gene>
    <name evidence="1" type="primary">rpsU2</name>
    <name evidence="1" type="synonym">rps21-2</name>
    <name type="ordered locus">Ava_4447</name>
</gene>
<name>RS212_TRIV2</name>
<organism>
    <name type="scientific">Trichormus variabilis (strain ATCC 29413 / PCC 7937)</name>
    <name type="common">Anabaena variabilis</name>
    <dbReference type="NCBI Taxonomy" id="240292"/>
    <lineage>
        <taxon>Bacteria</taxon>
        <taxon>Bacillati</taxon>
        <taxon>Cyanobacteriota</taxon>
        <taxon>Cyanophyceae</taxon>
        <taxon>Nostocales</taxon>
        <taxon>Nostocaceae</taxon>
        <taxon>Trichormus</taxon>
    </lineage>
</organism>
<feature type="chain" id="PRO_0000266622" description="Small ribosomal subunit protein bS21B">
    <location>
        <begin position="1"/>
        <end position="58"/>
    </location>
</feature>
<protein>
    <recommendedName>
        <fullName evidence="1">Small ribosomal subunit protein bS21B</fullName>
    </recommendedName>
    <alternativeName>
        <fullName evidence="2">30S ribosomal protein S21 2</fullName>
    </alternativeName>
</protein>
<evidence type="ECO:0000255" key="1">
    <source>
        <dbReference type="HAMAP-Rule" id="MF_00358"/>
    </source>
</evidence>
<evidence type="ECO:0000305" key="2"/>